<reference key="1">
    <citation type="journal article" date="1995" name="Science">
        <title>Whole-genome random sequencing and assembly of Haemophilus influenzae Rd.</title>
        <authorList>
            <person name="Fleischmann R.D."/>
            <person name="Adams M.D."/>
            <person name="White O."/>
            <person name="Clayton R.A."/>
            <person name="Kirkness E.F."/>
            <person name="Kerlavage A.R."/>
            <person name="Bult C.J."/>
            <person name="Tomb J.-F."/>
            <person name="Dougherty B.A."/>
            <person name="Merrick J.M."/>
            <person name="McKenney K."/>
            <person name="Sutton G.G."/>
            <person name="FitzHugh W."/>
            <person name="Fields C.A."/>
            <person name="Gocayne J.D."/>
            <person name="Scott J.D."/>
            <person name="Shirley R."/>
            <person name="Liu L.-I."/>
            <person name="Glodek A."/>
            <person name="Kelley J.M."/>
            <person name="Weidman J.F."/>
            <person name="Phillips C.A."/>
            <person name="Spriggs T."/>
            <person name="Hedblom E."/>
            <person name="Cotton M.D."/>
            <person name="Utterback T.R."/>
            <person name="Hanna M.C."/>
            <person name="Nguyen D.T."/>
            <person name="Saudek D.M."/>
            <person name="Brandon R.C."/>
            <person name="Fine L.D."/>
            <person name="Fritchman J.L."/>
            <person name="Fuhrmann J.L."/>
            <person name="Geoghagen N.S.M."/>
            <person name="Gnehm C.L."/>
            <person name="McDonald L.A."/>
            <person name="Small K.V."/>
            <person name="Fraser C.M."/>
            <person name="Smith H.O."/>
            <person name="Venter J.C."/>
        </authorList>
    </citation>
    <scope>NUCLEOTIDE SEQUENCE [LARGE SCALE GENOMIC DNA]</scope>
    <source>
        <strain>ATCC 51907 / DSM 11121 / KW20 / Rd</strain>
    </source>
</reference>
<sequence length="576" mass="64832">MRTLLPFIRLFKFAKFPLILGLVLMILGLGSSMGLLTVSGWFLAATAIAGLGTLFNFFYPSASVRGLAIGRTVMRYFEKIVTHDATFRILSKLRVQVFEKIIPLSPAVLNRYRNSDLLNRLVSDVDTLDSLYLRLLAPFFTAVFVIIAMMIGLSFINIPLALGLGLFLLILLMIIPTVFYRLGQQFGERLIQARATYRTQFLEFIQAQAELLLFNAEDKLKEKMLVTEKTWQEDQAKEAKLSGFSTALVLFLNGLLISGMLWFASNADFGTDEYHTAYIALFTFAALAAFEIIMPLGAAFLHIGQVIAAAERVTEIIEQKPLVEFNGNEEFETKVRLISAKNLNFSYPEQETLVLKNLTLDLEQGKKIAILGKTGSGKSSLLQLLVRNYDANQGELLLAEKPISAYSEETLRHQICFLTQRVHVFSDTLRQNLQFASADKISDEQMIEMLHQVGLSKLLEQEGKGLNLWLGDGGRPLSGGEQRRLGLARILLNNASILLLDEPTEGLDRETERQILRLILQHAENKTLIIVTHRLSSIEQFDKICVIDNGRLIEEGDYNSLITKENGFFKRLIERV</sequence>
<name>CYDC_HAEIN</name>
<keyword id="KW-0029">Amino-acid transport</keyword>
<keyword id="KW-0067">ATP-binding</keyword>
<keyword id="KW-0997">Cell inner membrane</keyword>
<keyword id="KW-1003">Cell membrane</keyword>
<keyword id="KW-0472">Membrane</keyword>
<keyword id="KW-0547">Nucleotide-binding</keyword>
<keyword id="KW-1185">Reference proteome</keyword>
<keyword id="KW-1278">Translocase</keyword>
<keyword id="KW-0812">Transmembrane</keyword>
<keyword id="KW-1133">Transmembrane helix</keyword>
<keyword id="KW-0813">Transport</keyword>
<proteinExistence type="inferred from homology"/>
<dbReference type="EC" id="7.4.2.-" evidence="1"/>
<dbReference type="EMBL" id="L42023">
    <property type="protein sequence ID" value="AAC22811.1"/>
    <property type="molecule type" value="Genomic_DNA"/>
</dbReference>
<dbReference type="PIR" id="E64186">
    <property type="entry name" value="E64186"/>
</dbReference>
<dbReference type="RefSeq" id="NP_439314.1">
    <property type="nucleotide sequence ID" value="NC_000907.1"/>
</dbReference>
<dbReference type="SMR" id="P45081"/>
<dbReference type="STRING" id="71421.HI_1156"/>
<dbReference type="EnsemblBacteria" id="AAC22811">
    <property type="protein sequence ID" value="AAC22811"/>
    <property type="gene ID" value="HI_1156"/>
</dbReference>
<dbReference type="KEGG" id="hin:HI_1156"/>
<dbReference type="PATRIC" id="fig|71421.8.peg.1207"/>
<dbReference type="eggNOG" id="COG4987">
    <property type="taxonomic scope" value="Bacteria"/>
</dbReference>
<dbReference type="HOGENOM" id="CLU_000604_84_9_6"/>
<dbReference type="OrthoDB" id="9802264at2"/>
<dbReference type="PhylomeDB" id="P45081"/>
<dbReference type="BioCyc" id="HINF71421:G1GJ1-1190-MONOMER"/>
<dbReference type="Proteomes" id="UP000000579">
    <property type="component" value="Chromosome"/>
</dbReference>
<dbReference type="GO" id="GO:0005886">
    <property type="term" value="C:plasma membrane"/>
    <property type="evidence" value="ECO:0000318"/>
    <property type="project" value="GO_Central"/>
</dbReference>
<dbReference type="GO" id="GO:0140359">
    <property type="term" value="F:ABC-type transporter activity"/>
    <property type="evidence" value="ECO:0007669"/>
    <property type="project" value="InterPro"/>
</dbReference>
<dbReference type="GO" id="GO:0005524">
    <property type="term" value="F:ATP binding"/>
    <property type="evidence" value="ECO:0007669"/>
    <property type="project" value="UniProtKB-KW"/>
</dbReference>
<dbReference type="GO" id="GO:0016887">
    <property type="term" value="F:ATP hydrolysis activity"/>
    <property type="evidence" value="ECO:0007669"/>
    <property type="project" value="InterPro"/>
</dbReference>
<dbReference type="GO" id="GO:0042626">
    <property type="term" value="F:ATPase-coupled transmembrane transporter activity"/>
    <property type="evidence" value="ECO:0000318"/>
    <property type="project" value="GO_Central"/>
</dbReference>
<dbReference type="GO" id="GO:0045454">
    <property type="term" value="P:cell redox homeostasis"/>
    <property type="evidence" value="ECO:0007669"/>
    <property type="project" value="InterPro"/>
</dbReference>
<dbReference type="GO" id="GO:0033228">
    <property type="term" value="P:cysteine export across plasma membrane"/>
    <property type="evidence" value="ECO:0000318"/>
    <property type="project" value="GO_Central"/>
</dbReference>
<dbReference type="GO" id="GO:0034775">
    <property type="term" value="P:glutathione transmembrane transport"/>
    <property type="evidence" value="ECO:0007669"/>
    <property type="project" value="InterPro"/>
</dbReference>
<dbReference type="CDD" id="cd18585">
    <property type="entry name" value="ABC_6TM_CydC"/>
    <property type="match status" value="1"/>
</dbReference>
<dbReference type="CDD" id="cd03247">
    <property type="entry name" value="ABCC_cytochrome_bd"/>
    <property type="match status" value="1"/>
</dbReference>
<dbReference type="FunFam" id="1.20.1560.10:FF:000060">
    <property type="entry name" value="Cysteine/glutathione ABC transporter ATP-binding protein/permease CydC"/>
    <property type="match status" value="1"/>
</dbReference>
<dbReference type="Gene3D" id="1.20.1560.10">
    <property type="entry name" value="ABC transporter type 1, transmembrane domain"/>
    <property type="match status" value="1"/>
</dbReference>
<dbReference type="Gene3D" id="3.40.50.300">
    <property type="entry name" value="P-loop containing nucleotide triphosphate hydrolases"/>
    <property type="match status" value="1"/>
</dbReference>
<dbReference type="InterPro" id="IPR003593">
    <property type="entry name" value="AAA+_ATPase"/>
</dbReference>
<dbReference type="InterPro" id="IPR011527">
    <property type="entry name" value="ABC1_TM_dom"/>
</dbReference>
<dbReference type="InterPro" id="IPR036640">
    <property type="entry name" value="ABC1_TM_sf"/>
</dbReference>
<dbReference type="InterPro" id="IPR014223">
    <property type="entry name" value="ABC_CydC/D"/>
</dbReference>
<dbReference type="InterPro" id="IPR003439">
    <property type="entry name" value="ABC_transporter-like_ATP-bd"/>
</dbReference>
<dbReference type="InterPro" id="IPR017871">
    <property type="entry name" value="ABC_transporter-like_CS"/>
</dbReference>
<dbReference type="InterPro" id="IPR027417">
    <property type="entry name" value="P-loop_NTPase"/>
</dbReference>
<dbReference type="InterPro" id="IPR039421">
    <property type="entry name" value="Type_1_exporter"/>
</dbReference>
<dbReference type="NCBIfam" id="TIGR02868">
    <property type="entry name" value="CydC"/>
    <property type="match status" value="1"/>
</dbReference>
<dbReference type="NCBIfam" id="NF008364">
    <property type="entry name" value="PRK11160.1"/>
    <property type="match status" value="1"/>
</dbReference>
<dbReference type="PANTHER" id="PTHR43394:SF1">
    <property type="entry name" value="ATP-BINDING CASSETTE SUB-FAMILY B MEMBER 10, MITOCHONDRIAL"/>
    <property type="match status" value="1"/>
</dbReference>
<dbReference type="PANTHER" id="PTHR43394">
    <property type="entry name" value="ATP-DEPENDENT PERMEASE MDL1, MITOCHONDRIAL"/>
    <property type="match status" value="1"/>
</dbReference>
<dbReference type="Pfam" id="PF00664">
    <property type="entry name" value="ABC_membrane"/>
    <property type="match status" value="1"/>
</dbReference>
<dbReference type="Pfam" id="PF00005">
    <property type="entry name" value="ABC_tran"/>
    <property type="match status" value="1"/>
</dbReference>
<dbReference type="SMART" id="SM00382">
    <property type="entry name" value="AAA"/>
    <property type="match status" value="1"/>
</dbReference>
<dbReference type="SUPFAM" id="SSF90123">
    <property type="entry name" value="ABC transporter transmembrane region"/>
    <property type="match status" value="1"/>
</dbReference>
<dbReference type="SUPFAM" id="SSF52540">
    <property type="entry name" value="P-loop containing nucleoside triphosphate hydrolases"/>
    <property type="match status" value="1"/>
</dbReference>
<dbReference type="PROSITE" id="PS50929">
    <property type="entry name" value="ABC_TM1F"/>
    <property type="match status" value="1"/>
</dbReference>
<dbReference type="PROSITE" id="PS00211">
    <property type="entry name" value="ABC_TRANSPORTER_1"/>
    <property type="match status" value="1"/>
</dbReference>
<dbReference type="PROSITE" id="PS50893">
    <property type="entry name" value="ABC_TRANSPORTER_2"/>
    <property type="match status" value="1"/>
</dbReference>
<gene>
    <name type="primary">cydC</name>
    <name type="ordered locus">HI_1156</name>
</gene>
<feature type="chain" id="PRO_0000092242" description="Glutathione/L-cysteine transport system ATP-binding/permease protein CydC">
    <location>
        <begin position="1"/>
        <end position="576"/>
    </location>
</feature>
<feature type="transmembrane region" description="Helical" evidence="2">
    <location>
        <begin position="16"/>
        <end position="36"/>
    </location>
</feature>
<feature type="transmembrane region" description="Helical" evidence="2">
    <location>
        <begin position="38"/>
        <end position="58"/>
    </location>
</feature>
<feature type="transmembrane region" description="Helical" evidence="2">
    <location>
        <begin position="133"/>
        <end position="153"/>
    </location>
</feature>
<feature type="transmembrane region" description="Helical" evidence="2">
    <location>
        <begin position="155"/>
        <end position="175"/>
    </location>
</feature>
<feature type="transmembrane region" description="Helical" evidence="2">
    <location>
        <begin position="244"/>
        <end position="264"/>
    </location>
</feature>
<feature type="transmembrane region" description="Helical" evidence="2">
    <location>
        <begin position="281"/>
        <end position="301"/>
    </location>
</feature>
<feature type="domain" description="ABC transmembrane type-1" evidence="4">
    <location>
        <begin position="19"/>
        <end position="308"/>
    </location>
</feature>
<feature type="domain" description="ABC transporter" evidence="3">
    <location>
        <begin position="338"/>
        <end position="574"/>
    </location>
</feature>
<feature type="binding site" evidence="3">
    <location>
        <begin position="372"/>
        <end position="379"/>
    </location>
    <ligand>
        <name>ATP</name>
        <dbReference type="ChEBI" id="CHEBI:30616"/>
    </ligand>
</feature>
<evidence type="ECO:0000250" key="1">
    <source>
        <dbReference type="UniProtKB" id="P23886"/>
    </source>
</evidence>
<evidence type="ECO:0000255" key="2"/>
<evidence type="ECO:0000255" key="3">
    <source>
        <dbReference type="PROSITE-ProRule" id="PRU00434"/>
    </source>
</evidence>
<evidence type="ECO:0000255" key="4">
    <source>
        <dbReference type="PROSITE-ProRule" id="PRU00441"/>
    </source>
</evidence>
<evidence type="ECO:0000305" key="5"/>
<accession>P45081</accession>
<protein>
    <recommendedName>
        <fullName evidence="1">Glutathione/L-cysteine transport system ATP-binding/permease protein CydC</fullName>
        <ecNumber evidence="1">7.4.2.-</ecNumber>
    </recommendedName>
</protein>
<comment type="function">
    <text evidence="1">Part of the ABC transporter complex CydDC that exports the reduced low-molecular-weight thiols cysteine and glutathione to the periplasm. Export of these thiol-containing redox-active molecules may be crucial for redox homeostasis in the periplasm, permitting correct assembly of various respiratory complexes and formation of correct disulfide bonds in periplasmic and secreted proteins. CydC contains transmembrane domains (TMD), which form a pore in the inner membrane, and an ATP-binding domain (NBD), which is responsible for energy generation. Required for the assembly of functional cytochrome bd-type quinol oxidases and periplasmic c-type cytochromes.</text>
</comment>
<comment type="catalytic activity">
    <reaction evidence="1">
        <text>L-cysteine(in) + ATP + H2O = L-cysteine(out) + ADP + phosphate + H(+)</text>
        <dbReference type="Rhea" id="RHEA:29783"/>
        <dbReference type="ChEBI" id="CHEBI:15377"/>
        <dbReference type="ChEBI" id="CHEBI:15378"/>
        <dbReference type="ChEBI" id="CHEBI:30616"/>
        <dbReference type="ChEBI" id="CHEBI:35235"/>
        <dbReference type="ChEBI" id="CHEBI:43474"/>
        <dbReference type="ChEBI" id="CHEBI:456216"/>
    </reaction>
    <physiologicalReaction direction="left-to-right" evidence="1">
        <dbReference type="Rhea" id="RHEA:29784"/>
    </physiologicalReaction>
</comment>
<comment type="catalytic activity">
    <reaction evidence="1">
        <text>glutathione(in) + ATP + H2O = glutathione(out) + ADP + phosphate + H(+)</text>
        <dbReference type="Rhea" id="RHEA:29787"/>
        <dbReference type="ChEBI" id="CHEBI:15377"/>
        <dbReference type="ChEBI" id="CHEBI:15378"/>
        <dbReference type="ChEBI" id="CHEBI:30616"/>
        <dbReference type="ChEBI" id="CHEBI:43474"/>
        <dbReference type="ChEBI" id="CHEBI:57925"/>
        <dbReference type="ChEBI" id="CHEBI:456216"/>
    </reaction>
    <physiologicalReaction direction="left-to-right" evidence="1">
        <dbReference type="Rhea" id="RHEA:29788"/>
    </physiologicalReaction>
</comment>
<comment type="subunit">
    <text evidence="1">Forms a heterodimer with CydD.</text>
</comment>
<comment type="subcellular location">
    <subcellularLocation>
        <location evidence="1">Cell inner membrane</location>
        <topology evidence="2">Multi-pass membrane protein</topology>
    </subcellularLocation>
</comment>
<comment type="domain">
    <text evidence="5">In CydC the ATP-binding domain (NBD) and the transmembrane domain (TMD) are fused.</text>
</comment>
<comment type="similarity">
    <text evidence="5">Belongs to the ABC transporter superfamily. Cysteine exporter (TC 3.A.1.129.1) family.</text>
</comment>
<organism>
    <name type="scientific">Haemophilus influenzae (strain ATCC 51907 / DSM 11121 / KW20 / Rd)</name>
    <dbReference type="NCBI Taxonomy" id="71421"/>
    <lineage>
        <taxon>Bacteria</taxon>
        <taxon>Pseudomonadati</taxon>
        <taxon>Pseudomonadota</taxon>
        <taxon>Gammaproteobacteria</taxon>
        <taxon>Pasteurellales</taxon>
        <taxon>Pasteurellaceae</taxon>
        <taxon>Haemophilus</taxon>
    </lineage>
</organism>